<gene>
    <name evidence="1" type="primary">kdpA</name>
    <name type="ordered locus">EFER_2412</name>
</gene>
<keyword id="KW-0997">Cell inner membrane</keyword>
<keyword id="KW-1003">Cell membrane</keyword>
<keyword id="KW-0406">Ion transport</keyword>
<keyword id="KW-0472">Membrane</keyword>
<keyword id="KW-0630">Potassium</keyword>
<keyword id="KW-0633">Potassium transport</keyword>
<keyword id="KW-0812">Transmembrane</keyword>
<keyword id="KW-1133">Transmembrane helix</keyword>
<keyword id="KW-0813">Transport</keyword>
<sequence>MAAQGFLLIVTFLLVLMVLARPLGSGLARLINDIPLPGTTGVERVLFRVLGVSGLEMNWKQYLSAILGLNMLGLAVLFFMLLGQHYLPLNPQQLPGLSWDLALNTAVSFVTNTNWQSYSGETTLSYFSQMAGLTVQNFLSAASGIAVIFALIRAFTRQSMSTLGNAWVDLLRITLWVLAPVALLIALFFIQQGALQNFLPYQSVTTVEGAQQLLPMGPVASQEAIKMLGTNGGGFFNANSSHPFENPTALTNFVQMLAIFVIPTALCFAFGEVAGERRQGRMLLWAMSVIFVICVGVVMWAEVQGNPHLLALGADSSINMEGKESRFGVLVSSLFAVVTTAASCGAVIAMHDSFTALGGMVPMWLMQIGEVVFGGVGSGLYGMMLFVLLAVFIAGLMIGRTPEYLGKKIDVREMKLTALAILVTPTLVLMGAALAMMTDAGRSAMLNPGPHGFSEVLYAVSSAANNNGSAFAGLSANSPFWNCLLAFCMFVGRFGVIIPVMAIAGSLVSKKSQPASSGTLPTHGPLFVGLLIGTVLLVGALTFIPALALGPVAEYLS</sequence>
<evidence type="ECO:0000255" key="1">
    <source>
        <dbReference type="HAMAP-Rule" id="MF_00275"/>
    </source>
</evidence>
<proteinExistence type="inferred from homology"/>
<reference key="1">
    <citation type="journal article" date="2009" name="PLoS Genet.">
        <title>Organised genome dynamics in the Escherichia coli species results in highly diverse adaptive paths.</title>
        <authorList>
            <person name="Touchon M."/>
            <person name="Hoede C."/>
            <person name="Tenaillon O."/>
            <person name="Barbe V."/>
            <person name="Baeriswyl S."/>
            <person name="Bidet P."/>
            <person name="Bingen E."/>
            <person name="Bonacorsi S."/>
            <person name="Bouchier C."/>
            <person name="Bouvet O."/>
            <person name="Calteau A."/>
            <person name="Chiapello H."/>
            <person name="Clermont O."/>
            <person name="Cruveiller S."/>
            <person name="Danchin A."/>
            <person name="Diard M."/>
            <person name="Dossat C."/>
            <person name="Karoui M.E."/>
            <person name="Frapy E."/>
            <person name="Garry L."/>
            <person name="Ghigo J.M."/>
            <person name="Gilles A.M."/>
            <person name="Johnson J."/>
            <person name="Le Bouguenec C."/>
            <person name="Lescat M."/>
            <person name="Mangenot S."/>
            <person name="Martinez-Jehanne V."/>
            <person name="Matic I."/>
            <person name="Nassif X."/>
            <person name="Oztas S."/>
            <person name="Petit M.A."/>
            <person name="Pichon C."/>
            <person name="Rouy Z."/>
            <person name="Ruf C.S."/>
            <person name="Schneider D."/>
            <person name="Tourret J."/>
            <person name="Vacherie B."/>
            <person name="Vallenet D."/>
            <person name="Medigue C."/>
            <person name="Rocha E.P.C."/>
            <person name="Denamur E."/>
        </authorList>
    </citation>
    <scope>NUCLEOTIDE SEQUENCE [LARGE SCALE GENOMIC DNA]</scope>
    <source>
        <strain>ATCC 35469 / DSM 13698 / BCRC 15582 / CCUG 18766 / IAM 14443 / JCM 21226 / LMG 7866 / NBRC 102419 / NCTC 12128 / CDC 0568-73</strain>
    </source>
</reference>
<name>KDPA_ESCF3</name>
<accession>B7LKR6</accession>
<protein>
    <recommendedName>
        <fullName evidence="1">Potassium-transporting ATPase potassium-binding subunit</fullName>
    </recommendedName>
    <alternativeName>
        <fullName evidence="1">ATP phosphohydrolase [potassium-transporting] A chain</fullName>
    </alternativeName>
    <alternativeName>
        <fullName evidence="1">Potassium-binding and translocating subunit A</fullName>
    </alternativeName>
    <alternativeName>
        <fullName evidence="1">Potassium-translocating ATPase A chain</fullName>
    </alternativeName>
</protein>
<organism>
    <name type="scientific">Escherichia fergusonii (strain ATCC 35469 / DSM 13698 / CCUG 18766 / IAM 14443 / JCM 21226 / LMG 7866 / NBRC 102419 / NCTC 12128 / CDC 0568-73)</name>
    <dbReference type="NCBI Taxonomy" id="585054"/>
    <lineage>
        <taxon>Bacteria</taxon>
        <taxon>Pseudomonadati</taxon>
        <taxon>Pseudomonadota</taxon>
        <taxon>Gammaproteobacteria</taxon>
        <taxon>Enterobacterales</taxon>
        <taxon>Enterobacteriaceae</taxon>
        <taxon>Escherichia</taxon>
    </lineage>
</organism>
<feature type="chain" id="PRO_1000119340" description="Potassium-transporting ATPase potassium-binding subunit">
    <location>
        <begin position="1"/>
        <end position="557"/>
    </location>
</feature>
<feature type="transmembrane region" description="Helical" evidence="1">
    <location>
        <begin position="5"/>
        <end position="25"/>
    </location>
</feature>
<feature type="transmembrane region" description="Helical" evidence="1">
    <location>
        <begin position="63"/>
        <end position="83"/>
    </location>
</feature>
<feature type="transmembrane region" description="Helical" evidence="1">
    <location>
        <begin position="132"/>
        <end position="152"/>
    </location>
</feature>
<feature type="transmembrane region" description="Helical" evidence="1">
    <location>
        <begin position="170"/>
        <end position="190"/>
    </location>
</feature>
<feature type="transmembrane region" description="Helical" evidence="1">
    <location>
        <begin position="253"/>
        <end position="273"/>
    </location>
</feature>
<feature type="transmembrane region" description="Helical" evidence="1">
    <location>
        <begin position="283"/>
        <end position="303"/>
    </location>
</feature>
<feature type="transmembrane region" description="Helical" evidence="1">
    <location>
        <begin position="329"/>
        <end position="349"/>
    </location>
</feature>
<feature type="transmembrane region" description="Helical" evidence="1">
    <location>
        <begin position="356"/>
        <end position="376"/>
    </location>
</feature>
<feature type="transmembrane region" description="Helical" evidence="1">
    <location>
        <begin position="379"/>
        <end position="399"/>
    </location>
</feature>
<feature type="transmembrane region" description="Helical" evidence="1">
    <location>
        <begin position="416"/>
        <end position="436"/>
    </location>
</feature>
<feature type="transmembrane region" description="Helical" evidence="1">
    <location>
        <begin position="484"/>
        <end position="504"/>
    </location>
</feature>
<feature type="transmembrane region" description="Helical" evidence="1">
    <location>
        <begin position="526"/>
        <end position="546"/>
    </location>
</feature>
<comment type="function">
    <text evidence="1">Part of the high-affinity ATP-driven potassium transport (or Kdp) system, which catalyzes the hydrolysis of ATP coupled with the electrogenic transport of potassium into the cytoplasm. This subunit binds the periplasmic potassium ions and delivers the ions to the membrane domain of KdpB through an intramembrane tunnel.</text>
</comment>
<comment type="subunit">
    <text evidence="1">The system is composed of three essential subunits: KdpA, KdpB and KdpC.</text>
</comment>
<comment type="subcellular location">
    <subcellularLocation>
        <location evidence="1">Cell inner membrane</location>
        <topology evidence="1">Multi-pass membrane protein</topology>
    </subcellularLocation>
</comment>
<comment type="similarity">
    <text evidence="1">Belongs to the KdpA family.</text>
</comment>
<dbReference type="EMBL" id="CU928158">
    <property type="protein sequence ID" value="CAQ89911.1"/>
    <property type="molecule type" value="Genomic_DNA"/>
</dbReference>
<dbReference type="RefSeq" id="WP_000741170.1">
    <property type="nucleotide sequence ID" value="NC_011740.1"/>
</dbReference>
<dbReference type="SMR" id="B7LKR6"/>
<dbReference type="GeneID" id="75056555"/>
<dbReference type="KEGG" id="efe:EFER_2412"/>
<dbReference type="HOGENOM" id="CLU_018614_3_0_6"/>
<dbReference type="OrthoDB" id="9763796at2"/>
<dbReference type="Proteomes" id="UP000000745">
    <property type="component" value="Chromosome"/>
</dbReference>
<dbReference type="GO" id="GO:0005886">
    <property type="term" value="C:plasma membrane"/>
    <property type="evidence" value="ECO:0007669"/>
    <property type="project" value="UniProtKB-SubCell"/>
</dbReference>
<dbReference type="GO" id="GO:0008556">
    <property type="term" value="F:P-type potassium transmembrane transporter activity"/>
    <property type="evidence" value="ECO:0007669"/>
    <property type="project" value="InterPro"/>
</dbReference>
<dbReference type="GO" id="GO:0030955">
    <property type="term" value="F:potassium ion binding"/>
    <property type="evidence" value="ECO:0007669"/>
    <property type="project" value="UniProtKB-UniRule"/>
</dbReference>
<dbReference type="HAMAP" id="MF_00275">
    <property type="entry name" value="KdpA"/>
    <property type="match status" value="1"/>
</dbReference>
<dbReference type="InterPro" id="IPR004623">
    <property type="entry name" value="KdpA"/>
</dbReference>
<dbReference type="NCBIfam" id="TIGR00680">
    <property type="entry name" value="kdpA"/>
    <property type="match status" value="1"/>
</dbReference>
<dbReference type="PANTHER" id="PTHR30607">
    <property type="entry name" value="POTASSIUM-TRANSPORTING ATPASE A CHAIN"/>
    <property type="match status" value="1"/>
</dbReference>
<dbReference type="PANTHER" id="PTHR30607:SF2">
    <property type="entry name" value="POTASSIUM-TRANSPORTING ATPASE POTASSIUM-BINDING SUBUNIT"/>
    <property type="match status" value="1"/>
</dbReference>
<dbReference type="Pfam" id="PF03814">
    <property type="entry name" value="KdpA"/>
    <property type="match status" value="1"/>
</dbReference>
<dbReference type="PIRSF" id="PIRSF001294">
    <property type="entry name" value="K_ATPaseA"/>
    <property type="match status" value="1"/>
</dbReference>